<comment type="function">
    <text evidence="1">With EpmB is involved in the beta-lysylation step of the post-translational modification of translation elongation factor P (EF-P) on 'Lys-34'. Catalyzes the ATP-dependent activation of (R)-beta-lysine produced by EpmB, forming a lysyl-adenylate, from which the beta-lysyl moiety is then transferred to the epsilon-amino group of EF-P 'Lys-34'.</text>
</comment>
<comment type="catalytic activity">
    <reaction evidence="1">
        <text>D-beta-lysine + L-lysyl-[protein] + ATP = N(6)-((3R)-3,6-diaminohexanoyl)-L-lysyl-[protein] + AMP + diphosphate + H(+)</text>
        <dbReference type="Rhea" id="RHEA:83435"/>
        <dbReference type="Rhea" id="RHEA-COMP:9752"/>
        <dbReference type="Rhea" id="RHEA-COMP:20131"/>
        <dbReference type="ChEBI" id="CHEBI:15378"/>
        <dbReference type="ChEBI" id="CHEBI:29969"/>
        <dbReference type="ChEBI" id="CHEBI:30616"/>
        <dbReference type="ChEBI" id="CHEBI:33019"/>
        <dbReference type="ChEBI" id="CHEBI:84138"/>
        <dbReference type="ChEBI" id="CHEBI:156053"/>
        <dbReference type="ChEBI" id="CHEBI:456215"/>
    </reaction>
    <physiologicalReaction direction="left-to-right" evidence="1">
        <dbReference type="Rhea" id="RHEA:83436"/>
    </physiologicalReaction>
</comment>
<comment type="subunit">
    <text evidence="1">Homodimer.</text>
</comment>
<comment type="similarity">
    <text evidence="1">Belongs to the class-II aminoacyl-tRNA synthetase family. EpmA subfamily.</text>
</comment>
<evidence type="ECO:0000255" key="1">
    <source>
        <dbReference type="HAMAP-Rule" id="MF_00174"/>
    </source>
</evidence>
<reference key="1">
    <citation type="journal article" date="2009" name="PLoS Genet.">
        <title>Organised genome dynamics in the Escherichia coli species results in highly diverse adaptive paths.</title>
        <authorList>
            <person name="Touchon M."/>
            <person name="Hoede C."/>
            <person name="Tenaillon O."/>
            <person name="Barbe V."/>
            <person name="Baeriswyl S."/>
            <person name="Bidet P."/>
            <person name="Bingen E."/>
            <person name="Bonacorsi S."/>
            <person name="Bouchier C."/>
            <person name="Bouvet O."/>
            <person name="Calteau A."/>
            <person name="Chiapello H."/>
            <person name="Clermont O."/>
            <person name="Cruveiller S."/>
            <person name="Danchin A."/>
            <person name="Diard M."/>
            <person name="Dossat C."/>
            <person name="Karoui M.E."/>
            <person name="Frapy E."/>
            <person name="Garry L."/>
            <person name="Ghigo J.M."/>
            <person name="Gilles A.M."/>
            <person name="Johnson J."/>
            <person name="Le Bouguenec C."/>
            <person name="Lescat M."/>
            <person name="Mangenot S."/>
            <person name="Martinez-Jehanne V."/>
            <person name="Matic I."/>
            <person name="Nassif X."/>
            <person name="Oztas S."/>
            <person name="Petit M.A."/>
            <person name="Pichon C."/>
            <person name="Rouy Z."/>
            <person name="Ruf C.S."/>
            <person name="Schneider D."/>
            <person name="Tourret J."/>
            <person name="Vacherie B."/>
            <person name="Vallenet D."/>
            <person name="Medigue C."/>
            <person name="Rocha E.P.C."/>
            <person name="Denamur E."/>
        </authorList>
    </citation>
    <scope>NUCLEOTIDE SEQUENCE [LARGE SCALE GENOMIC DNA]</scope>
    <source>
        <strain>55989 / EAEC</strain>
    </source>
</reference>
<proteinExistence type="inferred from homology"/>
<accession>B7LC16</accession>
<keyword id="KW-0067">ATP-binding</keyword>
<keyword id="KW-0436">Ligase</keyword>
<keyword id="KW-0547">Nucleotide-binding</keyword>
<keyword id="KW-1185">Reference proteome</keyword>
<gene>
    <name evidence="1" type="primary">epmA</name>
    <name type="synonym">yjeA</name>
    <name type="ordered locus">EC55989_4712</name>
</gene>
<protein>
    <recommendedName>
        <fullName evidence="1">Elongation factor P--(R)-beta-lysine ligase</fullName>
        <shortName evidence="1">EF-P--(R)-beta-lysine ligase</shortName>
        <ecNumber evidence="1">6.3.2.-</ecNumber>
    </recommendedName>
    <alternativeName>
        <fullName evidence="1">EF-P post-translational modification enzyme A</fullName>
    </alternativeName>
    <alternativeName>
        <fullName evidence="1">EF-P-lysine lysyltransferase</fullName>
    </alternativeName>
</protein>
<name>EPMA_ECO55</name>
<sequence>MSETASWQPSASIPNLLKRAAIMAEIRRFFADRGVLEVETPCMSQATVTDIHLVPFETRFVGPGHSQGMNLWLMTSPEYHMKRLLVAGCGPVFQLCRSFRNEEMGRYHNPEFTMLEWYRPHYDMYRLMNEVDDLLQQVLDCPAAESLSYQQAFLRYLEIDPLSADKTQLREVAAKLDLSNVADTEEDRDTLLQLLFTFGVEPNIGKEKPTFVYHFPASQASLAQISTEDHRVAERFEVYYKGIELANGFHELTDAREQQQRFEQDNRKRAARGLPQHPIDQNLIEALKVGMPDCSGVALGVDRLVMLALGAETLAEVIAFSVDRA</sequence>
<organism>
    <name type="scientific">Escherichia coli (strain 55989 / EAEC)</name>
    <dbReference type="NCBI Taxonomy" id="585055"/>
    <lineage>
        <taxon>Bacteria</taxon>
        <taxon>Pseudomonadati</taxon>
        <taxon>Pseudomonadota</taxon>
        <taxon>Gammaproteobacteria</taxon>
        <taxon>Enterobacterales</taxon>
        <taxon>Enterobacteriaceae</taxon>
        <taxon>Escherichia</taxon>
    </lineage>
</organism>
<dbReference type="EC" id="6.3.2.-" evidence="1"/>
<dbReference type="EMBL" id="CU928145">
    <property type="protein sequence ID" value="CAV01619.1"/>
    <property type="molecule type" value="Genomic_DNA"/>
</dbReference>
<dbReference type="RefSeq" id="WP_000004771.1">
    <property type="nucleotide sequence ID" value="NZ_CP028304.1"/>
</dbReference>
<dbReference type="SMR" id="B7LC16"/>
<dbReference type="GeneID" id="93777667"/>
<dbReference type="KEGG" id="eck:EC55989_4712"/>
<dbReference type="HOGENOM" id="CLU_008255_1_1_6"/>
<dbReference type="Proteomes" id="UP000000746">
    <property type="component" value="Chromosome"/>
</dbReference>
<dbReference type="GO" id="GO:0005829">
    <property type="term" value="C:cytosol"/>
    <property type="evidence" value="ECO:0007669"/>
    <property type="project" value="TreeGrafter"/>
</dbReference>
<dbReference type="GO" id="GO:0016880">
    <property type="term" value="F:acid-ammonia (or amide) ligase activity"/>
    <property type="evidence" value="ECO:0007669"/>
    <property type="project" value="UniProtKB-UniRule"/>
</dbReference>
<dbReference type="GO" id="GO:0005524">
    <property type="term" value="F:ATP binding"/>
    <property type="evidence" value="ECO:0007669"/>
    <property type="project" value="UniProtKB-UniRule"/>
</dbReference>
<dbReference type="GO" id="GO:0004824">
    <property type="term" value="F:lysine-tRNA ligase activity"/>
    <property type="evidence" value="ECO:0007669"/>
    <property type="project" value="InterPro"/>
</dbReference>
<dbReference type="GO" id="GO:0000049">
    <property type="term" value="F:tRNA binding"/>
    <property type="evidence" value="ECO:0007669"/>
    <property type="project" value="TreeGrafter"/>
</dbReference>
<dbReference type="GO" id="GO:0006430">
    <property type="term" value="P:lysyl-tRNA aminoacylation"/>
    <property type="evidence" value="ECO:0007669"/>
    <property type="project" value="InterPro"/>
</dbReference>
<dbReference type="FunFam" id="3.30.930.10:FF:000017">
    <property type="entry name" value="Elongation factor P--(R)-beta-lysine ligase"/>
    <property type="match status" value="1"/>
</dbReference>
<dbReference type="Gene3D" id="3.30.930.10">
    <property type="entry name" value="Bira Bifunctional Protein, Domain 2"/>
    <property type="match status" value="1"/>
</dbReference>
<dbReference type="HAMAP" id="MF_00174">
    <property type="entry name" value="EF_P_modif_A"/>
    <property type="match status" value="1"/>
</dbReference>
<dbReference type="InterPro" id="IPR004364">
    <property type="entry name" value="Aa-tRNA-synt_II"/>
</dbReference>
<dbReference type="InterPro" id="IPR006195">
    <property type="entry name" value="aa-tRNA-synth_II"/>
</dbReference>
<dbReference type="InterPro" id="IPR045864">
    <property type="entry name" value="aa-tRNA-synth_II/BPL/LPL"/>
</dbReference>
<dbReference type="InterPro" id="IPR004525">
    <property type="entry name" value="EpmA"/>
</dbReference>
<dbReference type="InterPro" id="IPR018149">
    <property type="entry name" value="Lys-tRNA-synth_II_C"/>
</dbReference>
<dbReference type="NCBIfam" id="TIGR00462">
    <property type="entry name" value="genX"/>
    <property type="match status" value="1"/>
</dbReference>
<dbReference type="NCBIfam" id="NF006828">
    <property type="entry name" value="PRK09350.1"/>
    <property type="match status" value="1"/>
</dbReference>
<dbReference type="PANTHER" id="PTHR42918:SF6">
    <property type="entry name" value="ELONGATION FACTOR P--(R)-BETA-LYSINE LIGASE"/>
    <property type="match status" value="1"/>
</dbReference>
<dbReference type="PANTHER" id="PTHR42918">
    <property type="entry name" value="LYSYL-TRNA SYNTHETASE"/>
    <property type="match status" value="1"/>
</dbReference>
<dbReference type="Pfam" id="PF00152">
    <property type="entry name" value="tRNA-synt_2"/>
    <property type="match status" value="1"/>
</dbReference>
<dbReference type="PRINTS" id="PR00982">
    <property type="entry name" value="TRNASYNTHLYS"/>
</dbReference>
<dbReference type="SUPFAM" id="SSF55681">
    <property type="entry name" value="Class II aaRS and biotin synthetases"/>
    <property type="match status" value="1"/>
</dbReference>
<dbReference type="PROSITE" id="PS50862">
    <property type="entry name" value="AA_TRNA_LIGASE_II"/>
    <property type="match status" value="1"/>
</dbReference>
<feature type="chain" id="PRO_1000199254" description="Elongation factor P--(R)-beta-lysine ligase">
    <location>
        <begin position="1"/>
        <end position="325"/>
    </location>
</feature>
<feature type="binding site" evidence="1">
    <location>
        <begin position="76"/>
        <end position="78"/>
    </location>
    <ligand>
        <name>substrate</name>
    </ligand>
</feature>
<feature type="binding site" evidence="1">
    <location>
        <begin position="100"/>
        <end position="102"/>
    </location>
    <ligand>
        <name>ATP</name>
        <dbReference type="ChEBI" id="CHEBI:30616"/>
    </ligand>
</feature>
<feature type="binding site" evidence="1">
    <location>
        <position position="109"/>
    </location>
    <ligand>
        <name>ATP</name>
        <dbReference type="ChEBI" id="CHEBI:30616"/>
    </ligand>
</feature>
<feature type="binding site" evidence="1">
    <location>
        <position position="118"/>
    </location>
    <ligand>
        <name>substrate</name>
    </ligand>
</feature>
<feature type="binding site" evidence="1">
    <location>
        <begin position="244"/>
        <end position="245"/>
    </location>
    <ligand>
        <name>ATP</name>
        <dbReference type="ChEBI" id="CHEBI:30616"/>
    </ligand>
</feature>
<feature type="binding site" evidence="1">
    <location>
        <position position="251"/>
    </location>
    <ligand>
        <name>substrate</name>
    </ligand>
</feature>
<feature type="binding site" evidence="1">
    <location>
        <position position="300"/>
    </location>
    <ligand>
        <name>ATP</name>
        <dbReference type="ChEBI" id="CHEBI:30616"/>
    </ligand>
</feature>